<name>URED_RHILO</name>
<keyword id="KW-0143">Chaperone</keyword>
<keyword id="KW-0963">Cytoplasm</keyword>
<keyword id="KW-0996">Nickel insertion</keyword>
<accession>Q98CY2</accession>
<proteinExistence type="inferred from homology"/>
<comment type="function">
    <text evidence="1">Required for maturation of urease via the functional incorporation of the urease nickel metallocenter.</text>
</comment>
<comment type="subunit">
    <text evidence="1">UreD, UreF and UreG form a complex that acts as a GTP-hydrolysis-dependent molecular chaperone, activating the urease apoprotein by helping to assemble the nickel containing metallocenter of UreC. The UreE protein probably delivers the nickel.</text>
</comment>
<comment type="subcellular location">
    <subcellularLocation>
        <location evidence="1">Cytoplasm</location>
    </subcellularLocation>
</comment>
<comment type="similarity">
    <text evidence="1">Belongs to the UreD family.</text>
</comment>
<organism>
    <name type="scientific">Mesorhizobium japonicum (strain LMG 29417 / CECT 9101 / MAFF 303099)</name>
    <name type="common">Mesorhizobium loti (strain MAFF 303099)</name>
    <dbReference type="NCBI Taxonomy" id="266835"/>
    <lineage>
        <taxon>Bacteria</taxon>
        <taxon>Pseudomonadati</taxon>
        <taxon>Pseudomonadota</taxon>
        <taxon>Alphaproteobacteria</taxon>
        <taxon>Hyphomicrobiales</taxon>
        <taxon>Phyllobacteriaceae</taxon>
        <taxon>Mesorhizobium</taxon>
    </lineage>
</organism>
<dbReference type="EMBL" id="BA000012">
    <property type="protein sequence ID" value="BAB51489.1"/>
    <property type="molecule type" value="Genomic_DNA"/>
</dbReference>
<dbReference type="RefSeq" id="WP_010912830.1">
    <property type="nucleotide sequence ID" value="NC_002678.2"/>
</dbReference>
<dbReference type="SMR" id="Q98CY2"/>
<dbReference type="KEGG" id="mlo:mll4949"/>
<dbReference type="PATRIC" id="fig|266835.9.peg.3909"/>
<dbReference type="eggNOG" id="COG0829">
    <property type="taxonomic scope" value="Bacteria"/>
</dbReference>
<dbReference type="HOGENOM" id="CLU_056339_2_0_5"/>
<dbReference type="Proteomes" id="UP000000552">
    <property type="component" value="Chromosome"/>
</dbReference>
<dbReference type="GO" id="GO:0005737">
    <property type="term" value="C:cytoplasm"/>
    <property type="evidence" value="ECO:0007669"/>
    <property type="project" value="UniProtKB-SubCell"/>
</dbReference>
<dbReference type="GO" id="GO:0016151">
    <property type="term" value="F:nickel cation binding"/>
    <property type="evidence" value="ECO:0007669"/>
    <property type="project" value="UniProtKB-UniRule"/>
</dbReference>
<dbReference type="HAMAP" id="MF_01384">
    <property type="entry name" value="UreD"/>
    <property type="match status" value="1"/>
</dbReference>
<dbReference type="InterPro" id="IPR002669">
    <property type="entry name" value="UreD"/>
</dbReference>
<dbReference type="PANTHER" id="PTHR33643">
    <property type="entry name" value="UREASE ACCESSORY PROTEIN D"/>
    <property type="match status" value="1"/>
</dbReference>
<dbReference type="PANTHER" id="PTHR33643:SF1">
    <property type="entry name" value="UREASE ACCESSORY PROTEIN D"/>
    <property type="match status" value="1"/>
</dbReference>
<dbReference type="Pfam" id="PF01774">
    <property type="entry name" value="UreD"/>
    <property type="match status" value="1"/>
</dbReference>
<feature type="chain" id="PRO_0000340504" description="Urease accessory protein UreD">
    <location>
        <begin position="1"/>
        <end position="280"/>
    </location>
</feature>
<protein>
    <recommendedName>
        <fullName evidence="1">Urease accessory protein UreD</fullName>
    </recommendedName>
</protein>
<sequence length="280" mass="29795">MDTIEYTEFSPPLAQRAAGLAQLGCASADGRTRLRRLYQDGSAKIRLPAVLADPLEAVLINTAGGLTGGDRIGWDVDVGTEASASITTQACEKVYRAASDQAEVRVKLTVGENGRIAWLPQETIVFDRAAFARTLDVELAAGAEALVLEATVFGRLAMGERASQGTFRDRWRVRQDGFLIHAEDFRIGPDITGALARPAAAGGVIAVATLLLVSPRAEALLDPVREIVGHQGGASVWSVKASGKLLARLYAGDGYQLRQRLVPLVGLLNGRAGLPKLWSL</sequence>
<evidence type="ECO:0000255" key="1">
    <source>
        <dbReference type="HAMAP-Rule" id="MF_01384"/>
    </source>
</evidence>
<reference key="1">
    <citation type="journal article" date="2000" name="DNA Res.">
        <title>Complete genome structure of the nitrogen-fixing symbiotic bacterium Mesorhizobium loti.</title>
        <authorList>
            <person name="Kaneko T."/>
            <person name="Nakamura Y."/>
            <person name="Sato S."/>
            <person name="Asamizu E."/>
            <person name="Kato T."/>
            <person name="Sasamoto S."/>
            <person name="Watanabe A."/>
            <person name="Idesawa K."/>
            <person name="Ishikawa A."/>
            <person name="Kawashima K."/>
            <person name="Kimura T."/>
            <person name="Kishida Y."/>
            <person name="Kiyokawa C."/>
            <person name="Kohara M."/>
            <person name="Matsumoto M."/>
            <person name="Matsuno A."/>
            <person name="Mochizuki Y."/>
            <person name="Nakayama S."/>
            <person name="Nakazaki N."/>
            <person name="Shimpo S."/>
            <person name="Sugimoto M."/>
            <person name="Takeuchi C."/>
            <person name="Yamada M."/>
            <person name="Tabata S."/>
        </authorList>
    </citation>
    <scope>NUCLEOTIDE SEQUENCE [LARGE SCALE GENOMIC DNA]</scope>
    <source>
        <strain>LMG 29417 / CECT 9101 / MAFF 303099</strain>
    </source>
</reference>
<gene>
    <name evidence="1" type="primary">ureD</name>
    <name type="ordered locus">mll4949</name>
</gene>